<sequence>MERRQAKIHVFVLIGLILLNSINQISSLSVTVNDEECVQEYVLYEGDTVSGNFVVVDHDIFWGSDHPGLDFTVTSPAGNIVQTLKGTSGDKFEFKAPKSGMYKFCFHNPYSTPETVSFYIHVGHIPNEHDLAKDEHLDPVNVKIAELREALESVVAEQKYLKARDTRHRHTNESTRKRVIFYTVGEYIFLAAASGLQVLYIRKLFSKSVAYNRV</sequence>
<reference key="1">
    <citation type="journal article" date="2000" name="DNA Res.">
        <title>Structural analysis of Arabidopsis thaliana chromosome 3. II. Sequence features of the 4,251,695 bp regions covered by 90 P1, TAC and BAC clones.</title>
        <authorList>
            <person name="Kaneko T."/>
            <person name="Katoh T."/>
            <person name="Sato S."/>
            <person name="Nakamura Y."/>
            <person name="Asamizu E."/>
            <person name="Tabata S."/>
        </authorList>
    </citation>
    <scope>NUCLEOTIDE SEQUENCE [LARGE SCALE GENOMIC DNA]</scope>
    <source>
        <strain>cv. Columbia</strain>
    </source>
</reference>
<reference key="2">
    <citation type="journal article" date="2000" name="DNA Res.">
        <title>Structural analysis of Arabidopsis thaliana chromosome 3. I. Sequence features of the regions of 4,504,864 bp covered by sixty P1 and TAC clones.</title>
        <authorList>
            <person name="Sato S."/>
            <person name="Nakamura Y."/>
            <person name="Kaneko T."/>
            <person name="Katoh T."/>
            <person name="Asamizu E."/>
            <person name="Tabata S."/>
        </authorList>
    </citation>
    <scope>NUCLEOTIDE SEQUENCE [LARGE SCALE GENOMIC DNA]</scope>
    <source>
        <strain>cv. Columbia</strain>
    </source>
</reference>
<reference key="3">
    <citation type="journal article" date="2017" name="Plant J.">
        <title>Araport11: a complete reannotation of the Arabidopsis thaliana reference genome.</title>
        <authorList>
            <person name="Cheng C.Y."/>
            <person name="Krishnakumar V."/>
            <person name="Chan A.P."/>
            <person name="Thibaud-Nissen F."/>
            <person name="Schobel S."/>
            <person name="Town C.D."/>
        </authorList>
    </citation>
    <scope>GENOME REANNOTATION</scope>
    <source>
        <strain>cv. Columbia</strain>
    </source>
</reference>
<reference key="4">
    <citation type="journal article" date="2003" name="Science">
        <title>Empirical analysis of transcriptional activity in the Arabidopsis genome.</title>
        <authorList>
            <person name="Yamada K."/>
            <person name="Lim J."/>
            <person name="Dale J.M."/>
            <person name="Chen H."/>
            <person name="Shinn P."/>
            <person name="Palm C.J."/>
            <person name="Southwick A.M."/>
            <person name="Wu H.C."/>
            <person name="Kim C.J."/>
            <person name="Nguyen M."/>
            <person name="Pham P.K."/>
            <person name="Cheuk R.F."/>
            <person name="Karlin-Newmann G."/>
            <person name="Liu S.X."/>
            <person name="Lam B."/>
            <person name="Sakano H."/>
            <person name="Wu T."/>
            <person name="Yu G."/>
            <person name="Miranda M."/>
            <person name="Quach H.L."/>
            <person name="Tripp M."/>
            <person name="Chang C.H."/>
            <person name="Lee J.M."/>
            <person name="Toriumi M.J."/>
            <person name="Chan M.M."/>
            <person name="Tang C.C."/>
            <person name="Onodera C.S."/>
            <person name="Deng J.M."/>
            <person name="Akiyama K."/>
            <person name="Ansari Y."/>
            <person name="Arakawa T."/>
            <person name="Banh J."/>
            <person name="Banno F."/>
            <person name="Bowser L."/>
            <person name="Brooks S.Y."/>
            <person name="Carninci P."/>
            <person name="Chao Q."/>
            <person name="Choy N."/>
            <person name="Enju A."/>
            <person name="Goldsmith A.D."/>
            <person name="Gurjal M."/>
            <person name="Hansen N.F."/>
            <person name="Hayashizaki Y."/>
            <person name="Johnson-Hopson C."/>
            <person name="Hsuan V.W."/>
            <person name="Iida K."/>
            <person name="Karnes M."/>
            <person name="Khan S."/>
            <person name="Koesema E."/>
            <person name="Ishida J."/>
            <person name="Jiang P.X."/>
            <person name="Jones T."/>
            <person name="Kawai J."/>
            <person name="Kamiya A."/>
            <person name="Meyers C."/>
            <person name="Nakajima M."/>
            <person name="Narusaka M."/>
            <person name="Seki M."/>
            <person name="Sakurai T."/>
            <person name="Satou M."/>
            <person name="Tamse R."/>
            <person name="Vaysberg M."/>
            <person name="Wallender E.K."/>
            <person name="Wong C."/>
            <person name="Yamamura Y."/>
            <person name="Yuan S."/>
            <person name="Shinozaki K."/>
            <person name="Davis R.W."/>
            <person name="Theologis A."/>
            <person name="Ecker J.R."/>
        </authorList>
    </citation>
    <scope>NUCLEOTIDE SEQUENCE [LARGE SCALE MRNA]</scope>
    <source>
        <strain>cv. Columbia</strain>
    </source>
</reference>
<reference key="5">
    <citation type="journal article" date="2012" name="J. Exp. Bot.">
        <title>Coupled transport of Arabidopsis p24 proteins at the ER-Golgi interface.</title>
        <authorList>
            <person name="Montesinos J.C."/>
            <person name="Sturm S."/>
            <person name="Langhans M."/>
            <person name="Hillmer S."/>
            <person name="Marcote M.J."/>
            <person name="Robinson D.G."/>
            <person name="Aniento F."/>
        </authorList>
    </citation>
    <scope>GENE FAMILY</scope>
    <scope>NOMENCLATURE</scope>
</reference>
<reference key="6">
    <citation type="journal article" date="2012" name="Traffic">
        <title>Subclass-specific localization and trafficking of Arabidopsis p24 proteins in the ER-Golgi interface.</title>
        <authorList>
            <person name="Chen J."/>
            <person name="Qi X."/>
            <person name="Zheng H."/>
        </authorList>
    </citation>
    <scope>GENE FAMILY</scope>
    <scope>SUBCELLULAR LOCATION</scope>
    <scope>COILED-COIL DOMAIN</scope>
</reference>
<feature type="signal peptide" evidence="2">
    <location>
        <begin position="1"/>
        <end position="27"/>
    </location>
</feature>
<feature type="chain" id="PRO_0000419793" description="Transmembrane emp24 domain-containing protein p24beta3">
    <location>
        <begin position="28"/>
        <end position="214"/>
    </location>
</feature>
<feature type="topological domain" description="Lumenal" evidence="2">
    <location>
        <begin position="28"/>
        <end position="178"/>
    </location>
</feature>
<feature type="transmembrane region" description="Helical" evidence="2">
    <location>
        <begin position="179"/>
        <end position="199"/>
    </location>
</feature>
<feature type="topological domain" description="Cytoplasmic" evidence="2">
    <location>
        <begin position="200"/>
        <end position="214"/>
    </location>
</feature>
<feature type="domain" description="GOLD" evidence="3">
    <location>
        <begin position="35"/>
        <end position="122"/>
    </location>
</feature>
<feature type="coiled-coil region" evidence="2">
    <location>
        <begin position="140"/>
        <end position="158"/>
    </location>
</feature>
<feature type="short sequence motif" description="COPI vesicle coat-binding" evidence="2">
    <location>
        <begin position="204"/>
        <end position="214"/>
    </location>
</feature>
<feature type="short sequence motif" description="COPII vesicle coat-binding" evidence="2">
    <location>
        <begin position="204"/>
        <end position="205"/>
    </location>
</feature>
<feature type="short sequence motif" description="Required for the export from the endoplasmic reticulum to the Golgi" evidence="1">
    <location>
        <begin position="213"/>
        <end position="214"/>
    </location>
</feature>
<feature type="modified residue" description="Omega-N-methylated arginine" evidence="1">
    <location>
        <position position="164"/>
    </location>
</feature>
<feature type="modified residue" description="Omega-N-methylated arginine" evidence="1">
    <location>
        <position position="169"/>
    </location>
</feature>
<feature type="glycosylation site" description="N-linked (GlcNAc...) asparagine" evidence="2">
    <location>
        <position position="172"/>
    </location>
</feature>
<dbReference type="EMBL" id="AP001300">
    <property type="protein sequence ID" value="BAB03029.1"/>
    <property type="molecule type" value="Genomic_DNA"/>
</dbReference>
<dbReference type="EMBL" id="AB022223">
    <property type="protein sequence ID" value="BAB03029.1"/>
    <property type="status" value="JOINED"/>
    <property type="molecule type" value="Genomic_DNA"/>
</dbReference>
<dbReference type="EMBL" id="CP002686">
    <property type="protein sequence ID" value="AEE76683.1"/>
    <property type="molecule type" value="Genomic_DNA"/>
</dbReference>
<dbReference type="EMBL" id="AY070742">
    <property type="protein sequence ID" value="AAL50082.1"/>
    <property type="molecule type" value="mRNA"/>
</dbReference>
<dbReference type="EMBL" id="AY093742">
    <property type="protein sequence ID" value="AAM10366.1"/>
    <property type="molecule type" value="mRNA"/>
</dbReference>
<dbReference type="RefSeq" id="NP_188924.3">
    <property type="nucleotide sequence ID" value="NM_113184.5"/>
</dbReference>
<dbReference type="SMR" id="Q9LIL4"/>
<dbReference type="BioGRID" id="7188">
    <property type="interactions" value="3"/>
</dbReference>
<dbReference type="FunCoup" id="Q9LIL4">
    <property type="interactions" value="3959"/>
</dbReference>
<dbReference type="IntAct" id="Q9LIL4">
    <property type="interactions" value="3"/>
</dbReference>
<dbReference type="STRING" id="3702.Q9LIL4"/>
<dbReference type="GlyGen" id="Q9LIL4">
    <property type="glycosylation" value="1 site"/>
</dbReference>
<dbReference type="SwissPalm" id="Q9LIL4"/>
<dbReference type="PaxDb" id="3702-AT3G22845.1"/>
<dbReference type="ProteomicsDB" id="248859"/>
<dbReference type="EnsemblPlants" id="AT3G22845.1">
    <property type="protein sequence ID" value="AT3G22845.1"/>
    <property type="gene ID" value="AT3G22845"/>
</dbReference>
<dbReference type="GeneID" id="821856"/>
<dbReference type="Gramene" id="AT3G22845.1">
    <property type="protein sequence ID" value="AT3G22845.1"/>
    <property type="gene ID" value="AT3G22845"/>
</dbReference>
<dbReference type="KEGG" id="ath:AT3G22845"/>
<dbReference type="Araport" id="AT3G22845"/>
<dbReference type="TAIR" id="AT3G22845"/>
<dbReference type="eggNOG" id="KOG1692">
    <property type="taxonomic scope" value="Eukaryota"/>
</dbReference>
<dbReference type="HOGENOM" id="CLU_066963_1_1_1"/>
<dbReference type="InParanoid" id="Q9LIL4"/>
<dbReference type="OMA" id="VGEYTFC"/>
<dbReference type="PhylomeDB" id="Q9LIL4"/>
<dbReference type="PRO" id="PR:Q9LIL4"/>
<dbReference type="Proteomes" id="UP000006548">
    <property type="component" value="Chromosome 3"/>
</dbReference>
<dbReference type="ExpressionAtlas" id="Q9LIL4">
    <property type="expression patterns" value="baseline and differential"/>
</dbReference>
<dbReference type="GO" id="GO:0005783">
    <property type="term" value="C:endoplasmic reticulum"/>
    <property type="evidence" value="ECO:0007005"/>
    <property type="project" value="TAIR"/>
</dbReference>
<dbReference type="GO" id="GO:0005794">
    <property type="term" value="C:Golgi apparatus"/>
    <property type="evidence" value="ECO:0007005"/>
    <property type="project" value="TAIR"/>
</dbReference>
<dbReference type="GO" id="GO:0032580">
    <property type="term" value="C:Golgi cisterna membrane"/>
    <property type="evidence" value="ECO:0007669"/>
    <property type="project" value="UniProtKB-SubCell"/>
</dbReference>
<dbReference type="GO" id="GO:0000325">
    <property type="term" value="C:plant-type vacuole"/>
    <property type="evidence" value="ECO:0007005"/>
    <property type="project" value="TAIR"/>
</dbReference>
<dbReference type="GO" id="GO:0015031">
    <property type="term" value="P:protein transport"/>
    <property type="evidence" value="ECO:0007669"/>
    <property type="project" value="UniProtKB-KW"/>
</dbReference>
<dbReference type="GO" id="GO:0016192">
    <property type="term" value="P:vesicle-mediated transport"/>
    <property type="evidence" value="ECO:0007669"/>
    <property type="project" value="UniProtKB-KW"/>
</dbReference>
<dbReference type="InterPro" id="IPR015720">
    <property type="entry name" value="Emp24-like"/>
</dbReference>
<dbReference type="InterPro" id="IPR009038">
    <property type="entry name" value="GOLD_dom"/>
</dbReference>
<dbReference type="InterPro" id="IPR036598">
    <property type="entry name" value="GOLD_dom_sf"/>
</dbReference>
<dbReference type="PANTHER" id="PTHR22811">
    <property type="entry name" value="TRANSMEMBRANE EMP24 DOMAIN-CONTAINING PROTEIN"/>
    <property type="match status" value="1"/>
</dbReference>
<dbReference type="Pfam" id="PF01105">
    <property type="entry name" value="EMP24_GP25L"/>
    <property type="match status" value="1"/>
</dbReference>
<dbReference type="SMART" id="SM01190">
    <property type="entry name" value="EMP24_GP25L"/>
    <property type="match status" value="1"/>
</dbReference>
<dbReference type="SUPFAM" id="SSF101576">
    <property type="entry name" value="Supernatant protein factor (SPF), C-terminal domain"/>
    <property type="match status" value="1"/>
</dbReference>
<dbReference type="PROSITE" id="PS50866">
    <property type="entry name" value="GOLD"/>
    <property type="match status" value="1"/>
</dbReference>
<proteinExistence type="evidence at transcript level"/>
<evidence type="ECO:0000250" key="1"/>
<evidence type="ECO:0000255" key="2"/>
<evidence type="ECO:0000255" key="3">
    <source>
        <dbReference type="PROSITE-ProRule" id="PRU00096"/>
    </source>
</evidence>
<evidence type="ECO:0000269" key="4">
    <source>
    </source>
</evidence>
<evidence type="ECO:0000305" key="5"/>
<protein>
    <recommendedName>
        <fullName>Transmembrane emp24 domain-containing protein p24beta3</fullName>
    </recommendedName>
    <alternativeName>
        <fullName>p24 family protein beta2</fullName>
        <shortName>p24beta2</shortName>
    </alternativeName>
    <alternativeName>
        <fullName>p24 family protein beta3</fullName>
        <shortName>p24beta3</shortName>
    </alternativeName>
</protein>
<name>P24B3_ARATH</name>
<accession>Q9LIL4</accession>
<keyword id="KW-0175">Coiled coil</keyword>
<keyword id="KW-0931">ER-Golgi transport</keyword>
<keyword id="KW-0325">Glycoprotein</keyword>
<keyword id="KW-0333">Golgi apparatus</keyword>
<keyword id="KW-0472">Membrane</keyword>
<keyword id="KW-0488">Methylation</keyword>
<keyword id="KW-0653">Protein transport</keyword>
<keyword id="KW-1185">Reference proteome</keyword>
<keyword id="KW-0732">Signal</keyword>
<keyword id="KW-0812">Transmembrane</keyword>
<keyword id="KW-1133">Transmembrane helix</keyword>
<keyword id="KW-0813">Transport</keyword>
<organism>
    <name type="scientific">Arabidopsis thaliana</name>
    <name type="common">Mouse-ear cress</name>
    <dbReference type="NCBI Taxonomy" id="3702"/>
    <lineage>
        <taxon>Eukaryota</taxon>
        <taxon>Viridiplantae</taxon>
        <taxon>Streptophyta</taxon>
        <taxon>Embryophyta</taxon>
        <taxon>Tracheophyta</taxon>
        <taxon>Spermatophyta</taxon>
        <taxon>Magnoliopsida</taxon>
        <taxon>eudicotyledons</taxon>
        <taxon>Gunneridae</taxon>
        <taxon>Pentapetalae</taxon>
        <taxon>rosids</taxon>
        <taxon>malvids</taxon>
        <taxon>Brassicales</taxon>
        <taxon>Brassicaceae</taxon>
        <taxon>Camelineae</taxon>
        <taxon>Arabidopsis</taxon>
    </lineage>
</organism>
<comment type="function">
    <text evidence="1">Involved in vesicular protein trafficking. Mainly functions in the early secretory pathway but also in post-Golgi membranes. Thought to act as cargo receptor at the lumenal side for incorporation of secretory cargo molecules into transport vesicles and to be involved in vesicle coat formation at the cytoplasmic side (By similarity).</text>
</comment>
<comment type="subunit">
    <text evidence="1">Probably oligomerizes with other members of the EMP24/GP25L family. Associates with the COPI vesicle coat (coatomer). Associates with the COPII vesicle coat (coatomer).</text>
</comment>
<comment type="subcellular location">
    <subcellularLocation>
        <location evidence="4">Golgi apparatus</location>
        <location evidence="4">cis-Golgi network membrane</location>
        <topology evidence="4">Single-pass type I membrane protein</topology>
    </subcellularLocation>
    <subcellularLocation>
        <location evidence="4">Golgi apparatus</location>
        <location evidence="4">Golgi stack membrane</location>
        <topology evidence="4">Single-pass type I membrane protein</topology>
    </subcellularLocation>
    <text evidence="1">Cycles between the endoplasmic reticulum and Golgi via COPI and COPII dependent pathways.</text>
</comment>
<comment type="domain">
    <text evidence="1">The cytoplasmic C-terminal domain contains an Arg-Val motif, which is involved in the anterograde ER-to-Golgi transport of the protein.</text>
</comment>
<comment type="similarity">
    <text evidence="5">Belongs to the EMP24/GP25L family.</text>
</comment>
<gene>
    <name type="ordered locus">At3g22845</name>
    <name type="ORF">MWI23.22</name>
</gene>